<dbReference type="EC" id="1.2.1.47" evidence="1"/>
<dbReference type="EC" id="1.2.1.3" evidence="1"/>
<dbReference type="PDB" id="1A4S">
    <property type="method" value="X-ray"/>
    <property type="resolution" value="2.10 A"/>
    <property type="chains" value="A/B/C/D=1-503"/>
</dbReference>
<dbReference type="PDB" id="1BPW">
    <property type="method" value="X-ray"/>
    <property type="resolution" value="2.80 A"/>
    <property type="chains" value="A/B/C/D=1-503"/>
</dbReference>
<dbReference type="PDBsum" id="1A4S"/>
<dbReference type="PDBsum" id="1BPW"/>
<dbReference type="SMR" id="P56533"/>
<dbReference type="DIP" id="DIP-2908N"/>
<dbReference type="UniPathway" id="UPA00118"/>
<dbReference type="EvolutionaryTrace" id="P56533"/>
<dbReference type="GO" id="GO:0005829">
    <property type="term" value="C:cytosol"/>
    <property type="evidence" value="ECO:0007669"/>
    <property type="project" value="UniProtKB-SubCell"/>
</dbReference>
<dbReference type="GO" id="GO:0047105">
    <property type="term" value="F:4-trimethylammoniobutyraldehyde dehydrogenase activity"/>
    <property type="evidence" value="ECO:0007669"/>
    <property type="project" value="UniProtKB-EC"/>
</dbReference>
<dbReference type="GO" id="GO:0004029">
    <property type="term" value="F:aldehyde dehydrogenase (NAD+) activity"/>
    <property type="evidence" value="ECO:0007669"/>
    <property type="project" value="UniProtKB-EC"/>
</dbReference>
<dbReference type="GO" id="GO:0045329">
    <property type="term" value="P:carnitine biosynthetic process"/>
    <property type="evidence" value="ECO:0007669"/>
    <property type="project" value="UniProtKB-UniPathway"/>
</dbReference>
<dbReference type="CDD" id="cd07090">
    <property type="entry name" value="ALDH_F9_TMBADH"/>
    <property type="match status" value="1"/>
</dbReference>
<dbReference type="FunFam" id="3.40.309.10:FF:000019">
    <property type="entry name" value="4-trimethylaminobutyraldehyde dehydrogenase isoform X1"/>
    <property type="match status" value="1"/>
</dbReference>
<dbReference type="FunFam" id="3.40.605.10:FF:000016">
    <property type="entry name" value="4-trimethylaminobutyraldehyde dehydrogenase isoform X1"/>
    <property type="match status" value="1"/>
</dbReference>
<dbReference type="FunFam" id="3.40.605.10:FF:000026">
    <property type="entry name" value="Aldehyde dehydrogenase, putative"/>
    <property type="match status" value="1"/>
</dbReference>
<dbReference type="Gene3D" id="3.40.605.10">
    <property type="entry name" value="Aldehyde Dehydrogenase, Chain A, domain 1"/>
    <property type="match status" value="1"/>
</dbReference>
<dbReference type="Gene3D" id="3.40.309.10">
    <property type="entry name" value="Aldehyde Dehydrogenase, Chain A, domain 2"/>
    <property type="match status" value="1"/>
</dbReference>
<dbReference type="InterPro" id="IPR016161">
    <property type="entry name" value="Ald_DH/histidinol_DH"/>
</dbReference>
<dbReference type="InterPro" id="IPR016163">
    <property type="entry name" value="Ald_DH_C"/>
</dbReference>
<dbReference type="InterPro" id="IPR016160">
    <property type="entry name" value="Ald_DH_CS_CYS"/>
</dbReference>
<dbReference type="InterPro" id="IPR029510">
    <property type="entry name" value="Ald_DH_CS_GLU"/>
</dbReference>
<dbReference type="InterPro" id="IPR016162">
    <property type="entry name" value="Ald_DH_N"/>
</dbReference>
<dbReference type="InterPro" id="IPR015590">
    <property type="entry name" value="Aldehyde_DH_dom"/>
</dbReference>
<dbReference type="NCBIfam" id="NF009725">
    <property type="entry name" value="PRK13252.1"/>
    <property type="match status" value="1"/>
</dbReference>
<dbReference type="PANTHER" id="PTHR11699">
    <property type="entry name" value="ALDEHYDE DEHYDROGENASE-RELATED"/>
    <property type="match status" value="1"/>
</dbReference>
<dbReference type="Pfam" id="PF00171">
    <property type="entry name" value="Aldedh"/>
    <property type="match status" value="1"/>
</dbReference>
<dbReference type="SUPFAM" id="SSF53720">
    <property type="entry name" value="ALDH-like"/>
    <property type="match status" value="1"/>
</dbReference>
<dbReference type="PROSITE" id="PS00070">
    <property type="entry name" value="ALDEHYDE_DEHYDR_CYS"/>
    <property type="match status" value="1"/>
</dbReference>
<dbReference type="PROSITE" id="PS00687">
    <property type="entry name" value="ALDEHYDE_DEHYDR_GLU"/>
    <property type="match status" value="1"/>
</dbReference>
<comment type="function">
    <text evidence="1">Converts gamma-trimethylaminobutyraldehyde into gamma-butyrobetaine with high efficiency (in vitro). Can catalyze the irreversible oxidation of a broad range of aldehydes to the corresponding acids in an NAD-dependent reaction, but with low efficiency.</text>
</comment>
<comment type="catalytic activity">
    <reaction evidence="1">
        <text>4-(trimethylamino)butanal + NAD(+) + H2O = 4-(trimethylamino)butanoate + NADH + 2 H(+)</text>
        <dbReference type="Rhea" id="RHEA:17985"/>
        <dbReference type="ChEBI" id="CHEBI:15377"/>
        <dbReference type="ChEBI" id="CHEBI:15378"/>
        <dbReference type="ChEBI" id="CHEBI:16244"/>
        <dbReference type="ChEBI" id="CHEBI:18020"/>
        <dbReference type="ChEBI" id="CHEBI:57540"/>
        <dbReference type="ChEBI" id="CHEBI:57945"/>
        <dbReference type="EC" id="1.2.1.47"/>
    </reaction>
</comment>
<comment type="catalytic activity">
    <reaction evidence="1">
        <text>an aldehyde + NAD(+) + H2O = a carboxylate + NADH + 2 H(+)</text>
        <dbReference type="Rhea" id="RHEA:16185"/>
        <dbReference type="ChEBI" id="CHEBI:15377"/>
        <dbReference type="ChEBI" id="CHEBI:15378"/>
        <dbReference type="ChEBI" id="CHEBI:17478"/>
        <dbReference type="ChEBI" id="CHEBI:29067"/>
        <dbReference type="ChEBI" id="CHEBI:57540"/>
        <dbReference type="ChEBI" id="CHEBI:57945"/>
        <dbReference type="EC" id="1.2.1.3"/>
    </reaction>
</comment>
<comment type="pathway">
    <text evidence="1">Amine and polyamine biosynthesis; carnitine biosynthesis.</text>
</comment>
<comment type="subunit">
    <text evidence="5">Homotetramer.</text>
</comment>
<comment type="subcellular location">
    <subcellularLocation>
        <location evidence="2">Cytoplasm</location>
        <location evidence="2">Cytosol</location>
    </subcellularLocation>
</comment>
<comment type="similarity">
    <text evidence="7">Belongs to the aldehyde dehydrogenase family.</text>
</comment>
<comment type="caution">
    <text evidence="6 7">Was originally named betaine aldehyde dehydrogenase (PubMed:9792097). Sequence similarity is higher with aldehyde dehydrogenase family 9 member A1, suggesting it has the same function and catalytic activities as other homologs.</text>
</comment>
<proteinExistence type="evidence at protein level"/>
<sequence length="503" mass="54368">AQLVDSMPSASTGSVVVTDDLNYWGGRRIKSKDGATTEPVFEPATGRVLCQMVPCGAEEVDQAVQSAQAAYLKWSKMAGIERSRVMLEAARIIRERRDNIAKLEVINNGKTITEAEYDIDAAWQCIEYYAGLAPTLSGQHIQLPGGAFAYTRREPLGVCAGILAWNYPFMIAAWKCAPALACGNAVVFKPSPMTPVTGVILAEIFHEAGVPVGLVNVVQGGAETGSLLCHHPNVAKVSFTGSVPTGKKVMEMSAKTVKHVTLELGGKSPLLIFKDCELENAVRGALMANFLTQGQVCTNGTRVFVQREIMPQFLEEVVKRTKAIVVGDPLLTETRMGGLISKPQLDKVLGFVAQAKKEGARVLCGGEPLTPSDPKLKNGYFMSPCVLDNCRDDMTCVKEEIFGPVMSVLPFDTEEEVLQRANNTTFGLASGVFTRDISRAHRVAANLEAGTCYINTYSISPVEVPFGGYKMSGFGRENGQATVDYYSQLKTVIVEMGDVDSLF</sequence>
<feature type="chain" id="PRO_0000056532" description="4-trimethylaminobutyraldehyde dehydrogenase">
    <location>
        <begin position="1"/>
        <end position="503"/>
    </location>
</feature>
<feature type="active site" description="Proton acceptor" evidence="3">
    <location>
        <position position="263"/>
    </location>
</feature>
<feature type="active site" description="Nucleophile" evidence="4">
    <location>
        <position position="297"/>
    </location>
</feature>
<feature type="binding site" evidence="5 9">
    <location>
        <position position="189"/>
    </location>
    <ligand>
        <name>NAD(+)</name>
        <dbReference type="ChEBI" id="CHEBI:57540"/>
    </ligand>
</feature>
<feature type="binding site" evidence="5 9">
    <location>
        <begin position="241"/>
        <end position="245"/>
    </location>
    <ligand>
        <name>NAD(+)</name>
        <dbReference type="ChEBI" id="CHEBI:57540"/>
    </ligand>
</feature>
<feature type="binding site" evidence="5 9">
    <location>
        <position position="400"/>
    </location>
    <ligand>
        <name>NAD(+)</name>
        <dbReference type="ChEBI" id="CHEBI:57540"/>
    </ligand>
</feature>
<feature type="site" description="Transition state stabilizer">
    <location>
        <position position="166"/>
    </location>
</feature>
<feature type="helix" evidence="10">
    <location>
        <begin position="2"/>
        <end position="5"/>
    </location>
</feature>
<feature type="helix" evidence="10">
    <location>
        <begin position="7"/>
        <end position="9"/>
    </location>
</feature>
<feature type="turn" evidence="10">
    <location>
        <begin position="12"/>
        <end position="14"/>
    </location>
</feature>
<feature type="strand" evidence="10">
    <location>
        <begin position="22"/>
        <end position="24"/>
    </location>
</feature>
<feature type="strand" evidence="10">
    <location>
        <begin position="27"/>
        <end position="29"/>
    </location>
</feature>
<feature type="strand" evidence="10">
    <location>
        <begin position="38"/>
        <end position="41"/>
    </location>
</feature>
<feature type="turn" evidence="10">
    <location>
        <begin position="43"/>
        <end position="45"/>
    </location>
</feature>
<feature type="strand" evidence="10">
    <location>
        <begin position="48"/>
        <end position="52"/>
    </location>
</feature>
<feature type="helix" evidence="10">
    <location>
        <begin position="57"/>
        <end position="74"/>
    </location>
</feature>
<feature type="helix" evidence="10">
    <location>
        <begin position="79"/>
        <end position="95"/>
    </location>
</feature>
<feature type="helix" evidence="10">
    <location>
        <begin position="97"/>
        <end position="108"/>
    </location>
</feature>
<feature type="helix" evidence="10">
    <location>
        <begin position="112"/>
        <end position="132"/>
    </location>
</feature>
<feature type="helix" evidence="10">
    <location>
        <begin position="133"/>
        <end position="135"/>
    </location>
</feature>
<feature type="strand" evidence="10">
    <location>
        <begin position="138"/>
        <end position="142"/>
    </location>
</feature>
<feature type="helix" evidence="10">
    <location>
        <begin position="144"/>
        <end position="146"/>
    </location>
</feature>
<feature type="strand" evidence="10">
    <location>
        <begin position="148"/>
        <end position="155"/>
    </location>
</feature>
<feature type="strand" evidence="10">
    <location>
        <begin position="157"/>
        <end position="162"/>
    </location>
</feature>
<feature type="strand" evidence="10">
    <location>
        <begin position="165"/>
        <end position="167"/>
    </location>
</feature>
<feature type="helix" evidence="10">
    <location>
        <begin position="168"/>
        <end position="181"/>
    </location>
</feature>
<feature type="strand" evidence="10">
    <location>
        <begin position="185"/>
        <end position="189"/>
    </location>
</feature>
<feature type="helix" evidence="10">
    <location>
        <begin position="196"/>
        <end position="207"/>
    </location>
</feature>
<feature type="strand" evidence="10">
    <location>
        <begin position="214"/>
        <end position="217"/>
    </location>
</feature>
<feature type="helix" evidence="10">
    <location>
        <begin position="222"/>
        <end position="230"/>
    </location>
</feature>
<feature type="strand" evidence="10">
    <location>
        <begin position="236"/>
        <end position="241"/>
    </location>
</feature>
<feature type="helix" evidence="10">
    <location>
        <begin position="243"/>
        <end position="254"/>
    </location>
</feature>
<feature type="turn" evidence="10">
    <location>
        <begin position="255"/>
        <end position="257"/>
    </location>
</feature>
<feature type="strand" evidence="10">
    <location>
        <begin position="259"/>
        <end position="263"/>
    </location>
</feature>
<feature type="strand" evidence="10">
    <location>
        <begin position="269"/>
        <end position="272"/>
    </location>
</feature>
<feature type="helix" evidence="10">
    <location>
        <begin position="278"/>
        <end position="287"/>
    </location>
</feature>
<feature type="helix" evidence="10">
    <location>
        <begin position="291"/>
        <end position="294"/>
    </location>
</feature>
<feature type="strand" evidence="10">
    <location>
        <begin position="302"/>
        <end position="306"/>
    </location>
</feature>
<feature type="helix" evidence="10">
    <location>
        <begin position="307"/>
        <end position="309"/>
    </location>
</feature>
<feature type="helix" evidence="10">
    <location>
        <begin position="310"/>
        <end position="322"/>
    </location>
</feature>
<feature type="helix" evidence="10">
    <location>
        <begin position="342"/>
        <end position="358"/>
    </location>
</feature>
<feature type="strand" evidence="10">
    <location>
        <begin position="361"/>
        <end position="364"/>
    </location>
</feature>
<feature type="helix" evidence="10">
    <location>
        <begin position="374"/>
        <end position="376"/>
    </location>
</feature>
<feature type="strand" evidence="10">
    <location>
        <begin position="385"/>
        <end position="389"/>
    </location>
</feature>
<feature type="helix" evidence="10">
    <location>
        <begin position="395"/>
        <end position="398"/>
    </location>
</feature>
<feature type="strand" evidence="10">
    <location>
        <begin position="403"/>
        <end position="411"/>
    </location>
</feature>
<feature type="helix" evidence="10">
    <location>
        <begin position="414"/>
        <end position="422"/>
    </location>
</feature>
<feature type="strand" evidence="10">
    <location>
        <begin position="428"/>
        <end position="433"/>
    </location>
</feature>
<feature type="helix" evidence="10">
    <location>
        <begin position="437"/>
        <end position="446"/>
    </location>
</feature>
<feature type="strand" evidence="10">
    <location>
        <begin position="449"/>
        <end position="455"/>
    </location>
</feature>
<feature type="helix" evidence="10">
    <location>
        <begin position="470"/>
        <end position="472"/>
    </location>
</feature>
<feature type="strand" evidence="11">
    <location>
        <begin position="473"/>
        <end position="475"/>
    </location>
</feature>
<feature type="helix" evidence="10">
    <location>
        <begin position="481"/>
        <end position="485"/>
    </location>
</feature>
<feature type="strand" evidence="10">
    <location>
        <begin position="486"/>
        <end position="494"/>
    </location>
</feature>
<keyword id="KW-0002">3D-structure</keyword>
<keyword id="KW-0963">Cytoplasm</keyword>
<keyword id="KW-0520">NAD</keyword>
<keyword id="KW-0560">Oxidoreductase</keyword>
<evidence type="ECO:0000250" key="1">
    <source>
        <dbReference type="UniProtKB" id="P49189"/>
    </source>
</evidence>
<evidence type="ECO:0000250" key="2">
    <source>
        <dbReference type="UniProtKB" id="Q9JLJ3"/>
    </source>
</evidence>
<evidence type="ECO:0000255" key="3">
    <source>
        <dbReference type="PROSITE-ProRule" id="PRU10007"/>
    </source>
</evidence>
<evidence type="ECO:0000255" key="4">
    <source>
        <dbReference type="PROSITE-ProRule" id="PRU10008"/>
    </source>
</evidence>
<evidence type="ECO:0000269" key="5">
    <source>
    </source>
</evidence>
<evidence type="ECO:0000303" key="6">
    <source>
    </source>
</evidence>
<evidence type="ECO:0000305" key="7"/>
<evidence type="ECO:0007744" key="8">
    <source>
        <dbReference type="PDB" id="1A4S"/>
    </source>
</evidence>
<evidence type="ECO:0007744" key="9">
    <source>
        <dbReference type="PDB" id="1BPW"/>
    </source>
</evidence>
<evidence type="ECO:0007829" key="10">
    <source>
        <dbReference type="PDB" id="1A4S"/>
    </source>
</evidence>
<evidence type="ECO:0007829" key="11">
    <source>
        <dbReference type="PDB" id="1BPW"/>
    </source>
</evidence>
<organism>
    <name type="scientific">Gadus morhua subsp. callarias</name>
    <name type="common">Baltic cod</name>
    <name type="synonym">Gadus callarias</name>
    <dbReference type="NCBI Taxonomy" id="8053"/>
    <lineage>
        <taxon>Eukaryota</taxon>
        <taxon>Metazoa</taxon>
        <taxon>Chordata</taxon>
        <taxon>Craniata</taxon>
        <taxon>Vertebrata</taxon>
        <taxon>Euteleostomi</taxon>
        <taxon>Actinopterygii</taxon>
        <taxon>Neopterygii</taxon>
        <taxon>Teleostei</taxon>
        <taxon>Neoteleostei</taxon>
        <taxon>Acanthomorphata</taxon>
        <taxon>Zeiogadaria</taxon>
        <taxon>Gadariae</taxon>
        <taxon>Gadiformes</taxon>
        <taxon>Gadoidei</taxon>
        <taxon>Gadidae</taxon>
        <taxon>Gadus</taxon>
    </lineage>
</organism>
<reference evidence="8 9" key="1">
    <citation type="journal article" date="1998" name="Protein Sci.">
        <title>Structure of betaine aldehyde dehydrogenase at 2.1-A resolution.</title>
        <authorList>
            <person name="Johansson K."/>
            <person name="El-Ahmad M."/>
            <person name="Ramaswamy S."/>
            <person name="Hjelmqvist L."/>
            <person name="Joernvall H."/>
            <person name="Eklund H."/>
        </authorList>
    </citation>
    <scope>X-RAY CRYSTALLOGRAPHY (2.1 ANGSTROMS) IN COMPLEX WITH NAD</scope>
    <scope>SUBUNIT</scope>
    <source>
        <tissue>Liver</tissue>
    </source>
</reference>
<accession>P56533</accession>
<protein>
    <recommendedName>
        <fullName>4-trimethylaminobutyraldehyde dehydrogenase</fullName>
        <shortName>TMABA-DH</shortName>
        <shortName>TMABADH</shortName>
        <ecNumber evidence="1">1.2.1.47</ecNumber>
    </recommendedName>
    <alternativeName>
        <fullName>Aldehyde dehydrogenase family 9 member A1</fullName>
        <ecNumber evidence="1">1.2.1.3</ecNumber>
    </alternativeName>
    <alternativeName>
        <fullName evidence="6">Betaine aldehyde dehydrogenase</fullName>
        <shortName>BADH</shortName>
    </alternativeName>
</protein>
<gene>
    <name type="primary">aldh9A1</name>
</gene>
<name>AL9A1_GADMC</name>